<reference key="1">
    <citation type="journal article" date="2011" name="J. Bacteriol.">
        <title>Comparative genomics of 28 Salmonella enterica isolates: evidence for CRISPR-mediated adaptive sublineage evolution.</title>
        <authorList>
            <person name="Fricke W.F."/>
            <person name="Mammel M.K."/>
            <person name="McDermott P.F."/>
            <person name="Tartera C."/>
            <person name="White D.G."/>
            <person name="Leclerc J.E."/>
            <person name="Ravel J."/>
            <person name="Cebula T.A."/>
        </authorList>
    </citation>
    <scope>NUCLEOTIDE SEQUENCE [LARGE SCALE GENOMIC DNA]</scope>
    <source>
        <strain>SL254</strain>
    </source>
</reference>
<evidence type="ECO:0000255" key="1">
    <source>
        <dbReference type="HAMAP-Rule" id="MF_00022"/>
    </source>
</evidence>
<gene>
    <name evidence="1" type="primary">gltX</name>
    <name type="ordered locus">SNSL254_A2607</name>
</gene>
<accession>B4SZT6</accession>
<keyword id="KW-0030">Aminoacyl-tRNA synthetase</keyword>
<keyword id="KW-0067">ATP-binding</keyword>
<keyword id="KW-0963">Cytoplasm</keyword>
<keyword id="KW-0436">Ligase</keyword>
<keyword id="KW-0479">Metal-binding</keyword>
<keyword id="KW-0547">Nucleotide-binding</keyword>
<keyword id="KW-0648">Protein biosynthesis</keyword>
<keyword id="KW-0862">Zinc</keyword>
<sequence>MKIKTRFAPSPTGYLHVGGARTALYSWLFARHHGGEFVLRIEDTDLERSTPEAIEAIMDGMNWLNLEWDEGPYFQTKRFDRYNAVIDEMLEAGTAYKCYCSKERLEQLREDQMAKGEKPRYDGRCRHSHEHHADDEPCVVRFANPQDGSVIFDDQIRGPIEFSNQELDDLIIRRTDGSPTYNFCVVVDDWDMEITHVIRGEDHINNTPRQINILKALNAPVPMYAHVSMINGDDGKKLSKRHGAVSVMQYRDDGYLPEALLNYLVRLGWSSGDQEIFTREEMIKLFSLGAVSKSASAFNTDKLLWLNHHYINTLAPEYVATHLQWHIEQENIDTRNGPQLAELVKLLGERCKTLKEMAQSCRYFYEDFSEFDADAAKKHLRPVARQPLEVVRDKLSAITDWSAENVHHAIQATADELEVGMGKVGMPLRVAVTGAGQSPALDVTVHAIGKTRSIERINKALGFIAERESQQ</sequence>
<dbReference type="EC" id="6.1.1.17" evidence="1"/>
<dbReference type="EMBL" id="CP001113">
    <property type="protein sequence ID" value="ACF64205.1"/>
    <property type="molecule type" value="Genomic_DNA"/>
</dbReference>
<dbReference type="RefSeq" id="WP_000695623.1">
    <property type="nucleotide sequence ID" value="NZ_CCMR01000001.1"/>
</dbReference>
<dbReference type="SMR" id="B4SZT6"/>
<dbReference type="KEGG" id="see:SNSL254_A2607"/>
<dbReference type="HOGENOM" id="CLU_015768_6_0_6"/>
<dbReference type="Proteomes" id="UP000008824">
    <property type="component" value="Chromosome"/>
</dbReference>
<dbReference type="GO" id="GO:0005829">
    <property type="term" value="C:cytosol"/>
    <property type="evidence" value="ECO:0007669"/>
    <property type="project" value="TreeGrafter"/>
</dbReference>
<dbReference type="GO" id="GO:0005524">
    <property type="term" value="F:ATP binding"/>
    <property type="evidence" value="ECO:0007669"/>
    <property type="project" value="UniProtKB-UniRule"/>
</dbReference>
<dbReference type="GO" id="GO:0004818">
    <property type="term" value="F:glutamate-tRNA ligase activity"/>
    <property type="evidence" value="ECO:0007669"/>
    <property type="project" value="UniProtKB-UniRule"/>
</dbReference>
<dbReference type="GO" id="GO:0000049">
    <property type="term" value="F:tRNA binding"/>
    <property type="evidence" value="ECO:0007669"/>
    <property type="project" value="InterPro"/>
</dbReference>
<dbReference type="GO" id="GO:0008270">
    <property type="term" value="F:zinc ion binding"/>
    <property type="evidence" value="ECO:0007669"/>
    <property type="project" value="UniProtKB-UniRule"/>
</dbReference>
<dbReference type="GO" id="GO:0006424">
    <property type="term" value="P:glutamyl-tRNA aminoacylation"/>
    <property type="evidence" value="ECO:0007669"/>
    <property type="project" value="UniProtKB-UniRule"/>
</dbReference>
<dbReference type="CDD" id="cd00808">
    <property type="entry name" value="GluRS_core"/>
    <property type="match status" value="1"/>
</dbReference>
<dbReference type="FunFam" id="1.10.10.350:FF:000001">
    <property type="entry name" value="Glutamate--tRNA ligase"/>
    <property type="match status" value="1"/>
</dbReference>
<dbReference type="FunFam" id="3.40.50.620:FF:000007">
    <property type="entry name" value="Glutamate--tRNA ligase"/>
    <property type="match status" value="1"/>
</dbReference>
<dbReference type="Gene3D" id="1.10.10.350">
    <property type="match status" value="1"/>
</dbReference>
<dbReference type="Gene3D" id="3.40.50.620">
    <property type="entry name" value="HUPs"/>
    <property type="match status" value="1"/>
</dbReference>
<dbReference type="HAMAP" id="MF_00022">
    <property type="entry name" value="Glu_tRNA_synth_type1"/>
    <property type="match status" value="1"/>
</dbReference>
<dbReference type="InterPro" id="IPR045462">
    <property type="entry name" value="aa-tRNA-synth_I_cd-bd"/>
</dbReference>
<dbReference type="InterPro" id="IPR020751">
    <property type="entry name" value="aa-tRNA-synth_I_codon-bd_sub2"/>
</dbReference>
<dbReference type="InterPro" id="IPR001412">
    <property type="entry name" value="aa-tRNA-synth_I_CS"/>
</dbReference>
<dbReference type="InterPro" id="IPR008925">
    <property type="entry name" value="aa_tRNA-synth_I_cd-bd_sf"/>
</dbReference>
<dbReference type="InterPro" id="IPR004527">
    <property type="entry name" value="Glu-tRNA-ligase_bac/mito"/>
</dbReference>
<dbReference type="InterPro" id="IPR000924">
    <property type="entry name" value="Glu/Gln-tRNA-synth"/>
</dbReference>
<dbReference type="InterPro" id="IPR020058">
    <property type="entry name" value="Glu/Gln-tRNA-synth_Ib_cat-dom"/>
</dbReference>
<dbReference type="InterPro" id="IPR049940">
    <property type="entry name" value="GluQ/Sye"/>
</dbReference>
<dbReference type="InterPro" id="IPR033910">
    <property type="entry name" value="GluRS_core"/>
</dbReference>
<dbReference type="InterPro" id="IPR014729">
    <property type="entry name" value="Rossmann-like_a/b/a_fold"/>
</dbReference>
<dbReference type="NCBIfam" id="TIGR00464">
    <property type="entry name" value="gltX_bact"/>
    <property type="match status" value="1"/>
</dbReference>
<dbReference type="PANTHER" id="PTHR43311">
    <property type="entry name" value="GLUTAMATE--TRNA LIGASE"/>
    <property type="match status" value="1"/>
</dbReference>
<dbReference type="PANTHER" id="PTHR43311:SF2">
    <property type="entry name" value="GLUTAMATE--TRNA LIGASE, MITOCHONDRIAL-RELATED"/>
    <property type="match status" value="1"/>
</dbReference>
<dbReference type="Pfam" id="PF19269">
    <property type="entry name" value="Anticodon_2"/>
    <property type="match status" value="1"/>
</dbReference>
<dbReference type="Pfam" id="PF00749">
    <property type="entry name" value="tRNA-synt_1c"/>
    <property type="match status" value="1"/>
</dbReference>
<dbReference type="PRINTS" id="PR00987">
    <property type="entry name" value="TRNASYNTHGLU"/>
</dbReference>
<dbReference type="SUPFAM" id="SSF48163">
    <property type="entry name" value="An anticodon-binding domain of class I aminoacyl-tRNA synthetases"/>
    <property type="match status" value="1"/>
</dbReference>
<dbReference type="SUPFAM" id="SSF52374">
    <property type="entry name" value="Nucleotidylyl transferase"/>
    <property type="match status" value="1"/>
</dbReference>
<dbReference type="PROSITE" id="PS00178">
    <property type="entry name" value="AA_TRNA_LIGASE_I"/>
    <property type="match status" value="1"/>
</dbReference>
<feature type="chain" id="PRO_1000090104" description="Glutamate--tRNA ligase">
    <location>
        <begin position="1"/>
        <end position="471"/>
    </location>
</feature>
<feature type="short sequence motif" description="'HIGH' region" evidence="1">
    <location>
        <begin position="9"/>
        <end position="19"/>
    </location>
</feature>
<feature type="short sequence motif" description="'KMSKS' region" evidence="1">
    <location>
        <begin position="237"/>
        <end position="241"/>
    </location>
</feature>
<feature type="binding site" evidence="1">
    <location>
        <position position="98"/>
    </location>
    <ligand>
        <name>Zn(2+)</name>
        <dbReference type="ChEBI" id="CHEBI:29105"/>
    </ligand>
</feature>
<feature type="binding site" evidence="1">
    <location>
        <position position="100"/>
    </location>
    <ligand>
        <name>Zn(2+)</name>
        <dbReference type="ChEBI" id="CHEBI:29105"/>
    </ligand>
</feature>
<feature type="binding site" evidence="1">
    <location>
        <position position="125"/>
    </location>
    <ligand>
        <name>Zn(2+)</name>
        <dbReference type="ChEBI" id="CHEBI:29105"/>
    </ligand>
</feature>
<feature type="binding site" evidence="1">
    <location>
        <position position="127"/>
    </location>
    <ligand>
        <name>Zn(2+)</name>
        <dbReference type="ChEBI" id="CHEBI:29105"/>
    </ligand>
</feature>
<feature type="binding site" evidence="1">
    <location>
        <position position="240"/>
    </location>
    <ligand>
        <name>ATP</name>
        <dbReference type="ChEBI" id="CHEBI:30616"/>
    </ligand>
</feature>
<proteinExistence type="inferred from homology"/>
<organism>
    <name type="scientific">Salmonella newport (strain SL254)</name>
    <dbReference type="NCBI Taxonomy" id="423368"/>
    <lineage>
        <taxon>Bacteria</taxon>
        <taxon>Pseudomonadati</taxon>
        <taxon>Pseudomonadota</taxon>
        <taxon>Gammaproteobacteria</taxon>
        <taxon>Enterobacterales</taxon>
        <taxon>Enterobacteriaceae</taxon>
        <taxon>Salmonella</taxon>
    </lineage>
</organism>
<protein>
    <recommendedName>
        <fullName evidence="1">Glutamate--tRNA ligase</fullName>
        <ecNumber evidence="1">6.1.1.17</ecNumber>
    </recommendedName>
    <alternativeName>
        <fullName evidence="1">Glutamyl-tRNA synthetase</fullName>
        <shortName evidence="1">GluRS</shortName>
    </alternativeName>
</protein>
<name>SYE_SALNS</name>
<comment type="function">
    <text evidence="1">Catalyzes the attachment of glutamate to tRNA(Glu) in a two-step reaction: glutamate is first activated by ATP to form Glu-AMP and then transferred to the acceptor end of tRNA(Glu).</text>
</comment>
<comment type="catalytic activity">
    <reaction evidence="1">
        <text>tRNA(Glu) + L-glutamate + ATP = L-glutamyl-tRNA(Glu) + AMP + diphosphate</text>
        <dbReference type="Rhea" id="RHEA:23540"/>
        <dbReference type="Rhea" id="RHEA-COMP:9663"/>
        <dbReference type="Rhea" id="RHEA-COMP:9680"/>
        <dbReference type="ChEBI" id="CHEBI:29985"/>
        <dbReference type="ChEBI" id="CHEBI:30616"/>
        <dbReference type="ChEBI" id="CHEBI:33019"/>
        <dbReference type="ChEBI" id="CHEBI:78442"/>
        <dbReference type="ChEBI" id="CHEBI:78520"/>
        <dbReference type="ChEBI" id="CHEBI:456215"/>
        <dbReference type="EC" id="6.1.1.17"/>
    </reaction>
</comment>
<comment type="cofactor">
    <cofactor evidence="1">
        <name>Zn(2+)</name>
        <dbReference type="ChEBI" id="CHEBI:29105"/>
    </cofactor>
    <text evidence="1">Binds 1 zinc ion per subunit.</text>
</comment>
<comment type="subunit">
    <text evidence="1">Monomer.</text>
</comment>
<comment type="subcellular location">
    <subcellularLocation>
        <location evidence="1">Cytoplasm</location>
    </subcellularLocation>
</comment>
<comment type="similarity">
    <text evidence="1">Belongs to the class-I aminoacyl-tRNA synthetase family. Glutamate--tRNA ligase type 1 subfamily.</text>
</comment>